<comment type="catalytic activity">
    <reaction evidence="1">
        <text>urea + 2 H2O + H(+) = hydrogencarbonate + 2 NH4(+)</text>
        <dbReference type="Rhea" id="RHEA:20557"/>
        <dbReference type="ChEBI" id="CHEBI:15377"/>
        <dbReference type="ChEBI" id="CHEBI:15378"/>
        <dbReference type="ChEBI" id="CHEBI:16199"/>
        <dbReference type="ChEBI" id="CHEBI:17544"/>
        <dbReference type="ChEBI" id="CHEBI:28938"/>
        <dbReference type="EC" id="3.5.1.5"/>
    </reaction>
</comment>
<comment type="cofactor">
    <cofactor evidence="1">
        <name>Ni cation</name>
        <dbReference type="ChEBI" id="CHEBI:25516"/>
    </cofactor>
    <text evidence="1">Binds 2 nickel ions per subunit.</text>
</comment>
<comment type="pathway">
    <text evidence="1">Nitrogen metabolism; urea degradation; CO(2) and NH(3) from urea (urease route): step 1/1.</text>
</comment>
<comment type="subunit">
    <text evidence="1">Heterotrimer of UreA (gamma), UreB (beta) and UreC (alpha) subunits. Three heterotrimers associate to form the active enzyme.</text>
</comment>
<comment type="subcellular location">
    <subcellularLocation>
        <location evidence="1">Cytoplasm</location>
    </subcellularLocation>
</comment>
<comment type="PTM">
    <text evidence="1">Carboxylation allows a single lysine to coordinate two nickel ions.</text>
</comment>
<comment type="similarity">
    <text evidence="1">Belongs to the metallo-dependent hydrolases superfamily. Urease alpha subunit family.</text>
</comment>
<gene>
    <name evidence="1" type="primary">ureC</name>
    <name type="synonym">yeuC</name>
    <name type="ordered locus">YPTB2942</name>
</gene>
<evidence type="ECO:0000255" key="1">
    <source>
        <dbReference type="HAMAP-Rule" id="MF_01953"/>
    </source>
</evidence>
<evidence type="ECO:0000305" key="2"/>
<organism>
    <name type="scientific">Yersinia pseudotuberculosis serotype I (strain IP32953)</name>
    <dbReference type="NCBI Taxonomy" id="273123"/>
    <lineage>
        <taxon>Bacteria</taxon>
        <taxon>Pseudomonadati</taxon>
        <taxon>Pseudomonadota</taxon>
        <taxon>Gammaproteobacteria</taxon>
        <taxon>Enterobacterales</taxon>
        <taxon>Yersiniaceae</taxon>
        <taxon>Yersinia</taxon>
    </lineage>
</organism>
<reference key="1">
    <citation type="journal article" date="1997" name="Infect. Immun.">
        <title>Urease is not involved in the virulence of Yersinia pseudotuberculosis in mice.</title>
        <authorList>
            <person name="Riot B."/>
            <person name="Berche P."/>
            <person name="Simonet M."/>
        </authorList>
    </citation>
    <scope>NUCLEOTIDE SEQUENCE [GENOMIC DNA]</scope>
    <source>
        <strain>IP 2777</strain>
    </source>
</reference>
<reference key="2">
    <citation type="journal article" date="2004" name="Proc. Natl. Acad. Sci. U.S.A.">
        <title>Insights into the evolution of Yersinia pestis through whole-genome comparison with Yersinia pseudotuberculosis.</title>
        <authorList>
            <person name="Chain P.S.G."/>
            <person name="Carniel E."/>
            <person name="Larimer F.W."/>
            <person name="Lamerdin J."/>
            <person name="Stoutland P.O."/>
            <person name="Regala W.M."/>
            <person name="Georgescu A.M."/>
            <person name="Vergez L.M."/>
            <person name="Land M.L."/>
            <person name="Motin V.L."/>
            <person name="Brubaker R.R."/>
            <person name="Fowler J."/>
            <person name="Hinnebusch J."/>
            <person name="Marceau M."/>
            <person name="Medigue C."/>
            <person name="Simonet M."/>
            <person name="Chenal-Francisque V."/>
            <person name="Souza B."/>
            <person name="Dacheux D."/>
            <person name="Elliott J.M."/>
            <person name="Derbise A."/>
            <person name="Hauser L.J."/>
            <person name="Garcia E."/>
        </authorList>
    </citation>
    <scope>NUCLEOTIDE SEQUENCE [LARGE SCALE GENOMIC DNA]</scope>
    <source>
        <strain>IP32953</strain>
    </source>
</reference>
<protein>
    <recommendedName>
        <fullName evidence="1">Urease subunit alpha</fullName>
        <ecNumber evidence="1">3.5.1.5</ecNumber>
    </recommendedName>
    <alternativeName>
        <fullName evidence="1">Urea amidohydrolase subunit alpha</fullName>
    </alternativeName>
</protein>
<feature type="chain" id="PRO_0000067567" description="Urease subunit alpha">
    <location>
        <begin position="1"/>
        <end position="572"/>
    </location>
</feature>
<feature type="domain" description="Urease" evidence="1">
    <location>
        <begin position="134"/>
        <end position="572"/>
    </location>
</feature>
<feature type="active site" description="Proton donor" evidence="1">
    <location>
        <position position="325"/>
    </location>
</feature>
<feature type="binding site" evidence="1">
    <location>
        <position position="139"/>
    </location>
    <ligand>
        <name>Ni(2+)</name>
        <dbReference type="ChEBI" id="CHEBI:49786"/>
        <label>1</label>
    </ligand>
</feature>
<feature type="binding site" evidence="1">
    <location>
        <position position="141"/>
    </location>
    <ligand>
        <name>Ni(2+)</name>
        <dbReference type="ChEBI" id="CHEBI:49786"/>
        <label>1</label>
    </ligand>
</feature>
<feature type="binding site" description="via carbamate group" evidence="1">
    <location>
        <position position="222"/>
    </location>
    <ligand>
        <name>Ni(2+)</name>
        <dbReference type="ChEBI" id="CHEBI:49786"/>
        <label>1</label>
    </ligand>
</feature>
<feature type="binding site" description="via carbamate group" evidence="1">
    <location>
        <position position="222"/>
    </location>
    <ligand>
        <name>Ni(2+)</name>
        <dbReference type="ChEBI" id="CHEBI:49786"/>
        <label>2</label>
    </ligand>
</feature>
<feature type="binding site" evidence="1">
    <location>
        <position position="224"/>
    </location>
    <ligand>
        <name>substrate</name>
    </ligand>
</feature>
<feature type="binding site" evidence="1">
    <location>
        <position position="251"/>
    </location>
    <ligand>
        <name>Ni(2+)</name>
        <dbReference type="ChEBI" id="CHEBI:49786"/>
        <label>2</label>
    </ligand>
</feature>
<feature type="binding site" evidence="1">
    <location>
        <position position="277"/>
    </location>
    <ligand>
        <name>Ni(2+)</name>
        <dbReference type="ChEBI" id="CHEBI:49786"/>
        <label>2</label>
    </ligand>
</feature>
<feature type="binding site" evidence="1">
    <location>
        <position position="365"/>
    </location>
    <ligand>
        <name>Ni(2+)</name>
        <dbReference type="ChEBI" id="CHEBI:49786"/>
        <label>1</label>
    </ligand>
</feature>
<feature type="modified residue" description="N6-carboxylysine" evidence="1">
    <location>
        <position position="222"/>
    </location>
</feature>
<feature type="sequence conflict" description="In Ref. 1; AAA87854." evidence="2" ref="1">
    <original>T</original>
    <variation>S</variation>
    <location>
        <position position="174"/>
    </location>
</feature>
<sequence length="572" mass="61019">MPQISRQEYAGLFGPTTGDKIRLGDTNLFIEIEKDLRGYGEESVYGGGKSLRDGMGANNNLTRDNGVLDLVITNVTIVDARLGVIKADVGIRDGKIAGIGKSGNPGVMDGVTQGMVVGVSTDAISGEHLILTAAGIDSHIHLISPQQAYHALSNGVATFFGGGIGPTDGTNGTTVTPGPWNIRQMLRSIEGLPVNVGILGKGNSYGRGPLLEQAIAGVVGYKVHEDWGATANALRHALRMADEVDIQVSVHTDSLNECGYVEDTIDAFEGRTIHTFHTEGAGGGHAPDIIRVASQTNVLPSSTNPTLPYGVNSQAELFDMIMVCHNLNPNVPADVSFAESRVRPETIAAENVLHDMGVISMFSSDSQAMGRVGENWLRILQTADAMKAARGKLPEDAAGNDNFRVLRYVAKITINPAITQGVSHVIGSVEVGKMADLVLWDPRFFGAKPKMVIKGGMINWAAMGDPNASLPTPQPVFYRPMFGAMGKTLQDTCVTFVSQAALDDGVKEKAGLDRQVIAVKNCRTISKRDLVRNDQTPNIEVDPETFAVKVDGVHATCEPIATASMNQRYFFG</sequence>
<name>URE1_YERPS</name>
<keyword id="KW-0963">Cytoplasm</keyword>
<keyword id="KW-0378">Hydrolase</keyword>
<keyword id="KW-0479">Metal-binding</keyword>
<keyword id="KW-0533">Nickel</keyword>
<dbReference type="EC" id="3.5.1.5" evidence="1"/>
<dbReference type="EMBL" id="U40842">
    <property type="protein sequence ID" value="AAA87854.1"/>
    <property type="molecule type" value="Genomic_DNA"/>
</dbReference>
<dbReference type="EMBL" id="BX936398">
    <property type="protein sequence ID" value="CAH22180.1"/>
    <property type="molecule type" value="Genomic_DNA"/>
</dbReference>
<dbReference type="RefSeq" id="WP_002212229.1">
    <property type="nucleotide sequence ID" value="NZ_CP009712.1"/>
</dbReference>
<dbReference type="SMR" id="P52313"/>
<dbReference type="MEROPS" id="M38.982"/>
<dbReference type="KEGG" id="ypo:BZ17_3686"/>
<dbReference type="KEGG" id="yps:YPTB2942"/>
<dbReference type="PATRIC" id="fig|273123.14.peg.3864"/>
<dbReference type="UniPathway" id="UPA00258">
    <property type="reaction ID" value="UER00370"/>
</dbReference>
<dbReference type="Proteomes" id="UP000001011">
    <property type="component" value="Chromosome"/>
</dbReference>
<dbReference type="GO" id="GO:0005737">
    <property type="term" value="C:cytoplasm"/>
    <property type="evidence" value="ECO:0007669"/>
    <property type="project" value="UniProtKB-SubCell"/>
</dbReference>
<dbReference type="GO" id="GO:0016151">
    <property type="term" value="F:nickel cation binding"/>
    <property type="evidence" value="ECO:0007669"/>
    <property type="project" value="UniProtKB-UniRule"/>
</dbReference>
<dbReference type="GO" id="GO:0009039">
    <property type="term" value="F:urease activity"/>
    <property type="evidence" value="ECO:0007669"/>
    <property type="project" value="UniProtKB-UniRule"/>
</dbReference>
<dbReference type="GO" id="GO:0043419">
    <property type="term" value="P:urea catabolic process"/>
    <property type="evidence" value="ECO:0007669"/>
    <property type="project" value="UniProtKB-UniRule"/>
</dbReference>
<dbReference type="CDD" id="cd00375">
    <property type="entry name" value="Urease_alpha"/>
    <property type="match status" value="1"/>
</dbReference>
<dbReference type="Gene3D" id="3.20.20.140">
    <property type="entry name" value="Metal-dependent hydrolases"/>
    <property type="match status" value="1"/>
</dbReference>
<dbReference type="Gene3D" id="2.30.40.10">
    <property type="entry name" value="Urease, subunit C, domain 1"/>
    <property type="match status" value="1"/>
</dbReference>
<dbReference type="HAMAP" id="MF_01953">
    <property type="entry name" value="Urease_alpha"/>
    <property type="match status" value="1"/>
</dbReference>
<dbReference type="InterPro" id="IPR006680">
    <property type="entry name" value="Amidohydro-rel"/>
</dbReference>
<dbReference type="InterPro" id="IPR011059">
    <property type="entry name" value="Metal-dep_hydrolase_composite"/>
</dbReference>
<dbReference type="InterPro" id="IPR032466">
    <property type="entry name" value="Metal_Hydrolase"/>
</dbReference>
<dbReference type="InterPro" id="IPR011612">
    <property type="entry name" value="Urease_alpha_N_dom"/>
</dbReference>
<dbReference type="InterPro" id="IPR050112">
    <property type="entry name" value="Urease_alpha_subunit"/>
</dbReference>
<dbReference type="InterPro" id="IPR017950">
    <property type="entry name" value="Urease_AS"/>
</dbReference>
<dbReference type="InterPro" id="IPR005848">
    <property type="entry name" value="Urease_asu"/>
</dbReference>
<dbReference type="InterPro" id="IPR017951">
    <property type="entry name" value="Urease_asu_c"/>
</dbReference>
<dbReference type="InterPro" id="IPR029754">
    <property type="entry name" value="Urease_Ni-bd"/>
</dbReference>
<dbReference type="NCBIfam" id="NF009686">
    <property type="entry name" value="PRK13207.1"/>
    <property type="match status" value="1"/>
</dbReference>
<dbReference type="NCBIfam" id="NF009834">
    <property type="entry name" value="PRK13309.1"/>
    <property type="match status" value="1"/>
</dbReference>
<dbReference type="NCBIfam" id="TIGR01792">
    <property type="entry name" value="urease_alph"/>
    <property type="match status" value="1"/>
</dbReference>
<dbReference type="PANTHER" id="PTHR43440">
    <property type="entry name" value="UREASE"/>
    <property type="match status" value="1"/>
</dbReference>
<dbReference type="PANTHER" id="PTHR43440:SF1">
    <property type="entry name" value="UREASE"/>
    <property type="match status" value="1"/>
</dbReference>
<dbReference type="Pfam" id="PF01979">
    <property type="entry name" value="Amidohydro_1"/>
    <property type="match status" value="1"/>
</dbReference>
<dbReference type="Pfam" id="PF00449">
    <property type="entry name" value="Urease_alpha"/>
    <property type="match status" value="1"/>
</dbReference>
<dbReference type="PRINTS" id="PR01752">
    <property type="entry name" value="UREASE"/>
</dbReference>
<dbReference type="SUPFAM" id="SSF51338">
    <property type="entry name" value="Composite domain of metallo-dependent hydrolases"/>
    <property type="match status" value="1"/>
</dbReference>
<dbReference type="SUPFAM" id="SSF51556">
    <property type="entry name" value="Metallo-dependent hydrolases"/>
    <property type="match status" value="1"/>
</dbReference>
<dbReference type="PROSITE" id="PS01120">
    <property type="entry name" value="UREASE_1"/>
    <property type="match status" value="1"/>
</dbReference>
<dbReference type="PROSITE" id="PS00145">
    <property type="entry name" value="UREASE_2"/>
    <property type="match status" value="1"/>
</dbReference>
<dbReference type="PROSITE" id="PS51368">
    <property type="entry name" value="UREASE_3"/>
    <property type="match status" value="1"/>
</dbReference>
<proteinExistence type="inferred from homology"/>
<accession>P52313</accession>
<accession>Q667Q0</accession>